<sequence>MEAAADGPAETQSPVEKDSPAKTQSPAQDTSIMSRNNADTGRVLALPEHKKKRKGNLPAESVKILRDWMYKHRFKAYPSEEEKQMLSEKTNLSLLQISNWFINARRRILPDMLQQRRNDPIIGHKTGKDAHATHLQSTEASVPAKSGPSGPDNVQSLPLWPLPKGQMSREKQPDPESAPSQKLTGIAQPKKKVKVSVTSPSSPELVSPEEHADFSSFLLLVDAAVQRAAELELEKKQEPNP</sequence>
<name>TF2LX_HUMAN</name>
<keyword id="KW-0002">3D-structure</keyword>
<keyword id="KW-0238">DNA-binding</keyword>
<keyword id="KW-0371">Homeobox</keyword>
<keyword id="KW-0539">Nucleus</keyword>
<keyword id="KW-1267">Proteomics identification</keyword>
<keyword id="KW-1185">Reference proteome</keyword>
<keyword id="KW-0804">Transcription</keyword>
<keyword id="KW-0805">Transcription regulation</keyword>
<organism>
    <name type="scientific">Homo sapiens</name>
    <name type="common">Human</name>
    <dbReference type="NCBI Taxonomy" id="9606"/>
    <lineage>
        <taxon>Eukaryota</taxon>
        <taxon>Metazoa</taxon>
        <taxon>Chordata</taxon>
        <taxon>Craniata</taxon>
        <taxon>Vertebrata</taxon>
        <taxon>Euteleostomi</taxon>
        <taxon>Mammalia</taxon>
        <taxon>Eutheria</taxon>
        <taxon>Euarchontoglires</taxon>
        <taxon>Primates</taxon>
        <taxon>Haplorrhini</taxon>
        <taxon>Catarrhini</taxon>
        <taxon>Hominidae</taxon>
        <taxon>Homo</taxon>
    </lineage>
</organism>
<dbReference type="EMBL" id="AJ427749">
    <property type="protein sequence ID" value="CAD20750.1"/>
    <property type="molecule type" value="Genomic_DNA"/>
</dbReference>
<dbReference type="EMBL" id="AF497480">
    <property type="protein sequence ID" value="AAM18073.1"/>
    <property type="molecule type" value="mRNA"/>
</dbReference>
<dbReference type="EMBL" id="AL590041">
    <property type="status" value="NOT_ANNOTATED_CDS"/>
    <property type="molecule type" value="Genomic_DNA"/>
</dbReference>
<dbReference type="EMBL" id="BC117398">
    <property type="protein sequence ID" value="AAI17399.1"/>
    <property type="molecule type" value="mRNA"/>
</dbReference>
<dbReference type="EMBL" id="BC117400">
    <property type="protein sequence ID" value="AAI17401.1"/>
    <property type="molecule type" value="mRNA"/>
</dbReference>
<dbReference type="CCDS" id="CCDS14459.1"/>
<dbReference type="RefSeq" id="NP_620410.3">
    <property type="nucleotide sequence ID" value="NM_138960.3"/>
</dbReference>
<dbReference type="PDB" id="2DMN">
    <property type="method" value="NMR"/>
    <property type="chains" value="A=51-120"/>
</dbReference>
<dbReference type="PDBsum" id="2DMN"/>
<dbReference type="BMRB" id="Q8IUE1"/>
<dbReference type="SMR" id="Q8IUE1"/>
<dbReference type="BioGRID" id="124690">
    <property type="interactions" value="35"/>
</dbReference>
<dbReference type="FunCoup" id="Q8IUE1">
    <property type="interactions" value="20"/>
</dbReference>
<dbReference type="IntAct" id="Q8IUE1">
    <property type="interactions" value="34"/>
</dbReference>
<dbReference type="STRING" id="9606.ENSP00000453704"/>
<dbReference type="GlyGen" id="Q8IUE1">
    <property type="glycosylation" value="1 site, 1 O-linked glycan (1 site)"/>
</dbReference>
<dbReference type="iPTMnet" id="Q8IUE1"/>
<dbReference type="PhosphoSitePlus" id="Q8IUE1"/>
<dbReference type="BioMuta" id="TGIF2LX"/>
<dbReference type="DMDM" id="44888510"/>
<dbReference type="MassIVE" id="Q8IUE1"/>
<dbReference type="PaxDb" id="9606-ENSP00000453704"/>
<dbReference type="PeptideAtlas" id="Q8IUE1"/>
<dbReference type="ProteomicsDB" id="70555"/>
<dbReference type="Pumba" id="Q8IUE1"/>
<dbReference type="Antibodypedia" id="28433">
    <property type="antibodies" value="133 antibodies from 25 providers"/>
</dbReference>
<dbReference type="DNASU" id="90316"/>
<dbReference type="Ensembl" id="ENST00000283891.6">
    <property type="protein sequence ID" value="ENSP00000355119.4"/>
    <property type="gene ID" value="ENSG00000153779.11"/>
</dbReference>
<dbReference type="Ensembl" id="ENST00000561129.2">
    <property type="protein sequence ID" value="ENSP00000453704.1"/>
    <property type="gene ID" value="ENSG00000153779.11"/>
</dbReference>
<dbReference type="GeneID" id="90316"/>
<dbReference type="KEGG" id="hsa:90316"/>
<dbReference type="MANE-Select" id="ENST00000283891.6">
    <property type="protein sequence ID" value="ENSP00000355119.4"/>
    <property type="RefSeq nucleotide sequence ID" value="NM_138960.4"/>
    <property type="RefSeq protein sequence ID" value="NP_620410.3"/>
</dbReference>
<dbReference type="UCSC" id="uc004efe.4">
    <property type="organism name" value="human"/>
</dbReference>
<dbReference type="AGR" id="HGNC:18570"/>
<dbReference type="CTD" id="90316"/>
<dbReference type="DisGeNET" id="90316"/>
<dbReference type="GeneCards" id="TGIF2LX"/>
<dbReference type="HGNC" id="HGNC:18570">
    <property type="gene designation" value="TGIF2LX"/>
</dbReference>
<dbReference type="HPA" id="ENSG00000153779">
    <property type="expression patterns" value="Tissue enriched (testis)"/>
</dbReference>
<dbReference type="MIM" id="300411">
    <property type="type" value="gene"/>
</dbReference>
<dbReference type="neXtProt" id="NX_Q8IUE1"/>
<dbReference type="OpenTargets" id="ENSG00000153779"/>
<dbReference type="PharmGKB" id="PA38582"/>
<dbReference type="VEuPathDB" id="HostDB:ENSG00000153779"/>
<dbReference type="eggNOG" id="KOG0773">
    <property type="taxonomic scope" value="Eukaryota"/>
</dbReference>
<dbReference type="GeneTree" id="ENSGT00940000163848"/>
<dbReference type="HOGENOM" id="CLU_034318_1_0_1"/>
<dbReference type="InParanoid" id="Q8IUE1"/>
<dbReference type="OMA" id="PNQITMY"/>
<dbReference type="OrthoDB" id="10056939at2759"/>
<dbReference type="PAN-GO" id="Q8IUE1">
    <property type="GO annotations" value="3 GO annotations based on evolutionary models"/>
</dbReference>
<dbReference type="PhylomeDB" id="Q8IUE1"/>
<dbReference type="TreeFam" id="TF318093"/>
<dbReference type="PathwayCommons" id="Q8IUE1"/>
<dbReference type="SignaLink" id="Q8IUE1"/>
<dbReference type="BioGRID-ORCS" id="90316">
    <property type="hits" value="13 hits in 708 CRISPR screens"/>
</dbReference>
<dbReference type="EvolutionaryTrace" id="Q8IUE1"/>
<dbReference type="GenomeRNAi" id="90316"/>
<dbReference type="Pharos" id="Q8IUE1">
    <property type="development level" value="Tbio"/>
</dbReference>
<dbReference type="PRO" id="PR:Q8IUE1"/>
<dbReference type="Proteomes" id="UP000005640">
    <property type="component" value="Chromosome X"/>
</dbReference>
<dbReference type="RNAct" id="Q8IUE1">
    <property type="molecule type" value="protein"/>
</dbReference>
<dbReference type="Bgee" id="ENSG00000153779">
    <property type="expression patterns" value="Expressed in primordial germ cell in gonad and 12 other cell types or tissues"/>
</dbReference>
<dbReference type="GO" id="GO:0000785">
    <property type="term" value="C:chromatin"/>
    <property type="evidence" value="ECO:0000247"/>
    <property type="project" value="NTNU_SB"/>
</dbReference>
<dbReference type="GO" id="GO:0005634">
    <property type="term" value="C:nucleus"/>
    <property type="evidence" value="ECO:0007669"/>
    <property type="project" value="UniProtKB-SubCell"/>
</dbReference>
<dbReference type="GO" id="GO:0000981">
    <property type="term" value="F:DNA-binding transcription factor activity, RNA polymerase II-specific"/>
    <property type="evidence" value="ECO:0000247"/>
    <property type="project" value="NTNU_SB"/>
</dbReference>
<dbReference type="GO" id="GO:0001227">
    <property type="term" value="F:DNA-binding transcription repressor activity, RNA polymerase II-specific"/>
    <property type="evidence" value="ECO:0000318"/>
    <property type="project" value="GO_Central"/>
</dbReference>
<dbReference type="GO" id="GO:1990837">
    <property type="term" value="F:sequence-specific double-stranded DNA binding"/>
    <property type="evidence" value="ECO:0000314"/>
    <property type="project" value="ARUK-UCL"/>
</dbReference>
<dbReference type="GO" id="GO:0000122">
    <property type="term" value="P:negative regulation of transcription by RNA polymerase II"/>
    <property type="evidence" value="ECO:0000318"/>
    <property type="project" value="GO_Central"/>
</dbReference>
<dbReference type="CDD" id="cd00086">
    <property type="entry name" value="homeodomain"/>
    <property type="match status" value="1"/>
</dbReference>
<dbReference type="FunFam" id="1.10.10.60:FF:000059">
    <property type="entry name" value="TGFB-induced factor homeobox 1"/>
    <property type="match status" value="1"/>
</dbReference>
<dbReference type="Gene3D" id="1.10.10.60">
    <property type="entry name" value="Homeodomain-like"/>
    <property type="match status" value="1"/>
</dbReference>
<dbReference type="InterPro" id="IPR001356">
    <property type="entry name" value="HD"/>
</dbReference>
<dbReference type="InterPro" id="IPR009057">
    <property type="entry name" value="Homeodomain-like_sf"/>
</dbReference>
<dbReference type="InterPro" id="IPR008422">
    <property type="entry name" value="KN_HD"/>
</dbReference>
<dbReference type="InterPro" id="IPR050224">
    <property type="entry name" value="TALE_homeobox"/>
</dbReference>
<dbReference type="PANTHER" id="PTHR11850">
    <property type="entry name" value="HOMEOBOX PROTEIN TRANSCRIPTION FACTORS"/>
    <property type="match status" value="1"/>
</dbReference>
<dbReference type="Pfam" id="PF05920">
    <property type="entry name" value="Homeobox_KN"/>
    <property type="match status" value="1"/>
</dbReference>
<dbReference type="SMART" id="SM00389">
    <property type="entry name" value="HOX"/>
    <property type="match status" value="1"/>
</dbReference>
<dbReference type="SUPFAM" id="SSF46689">
    <property type="entry name" value="Homeodomain-like"/>
    <property type="match status" value="1"/>
</dbReference>
<dbReference type="PROSITE" id="PS50071">
    <property type="entry name" value="HOMEOBOX_2"/>
    <property type="match status" value="1"/>
</dbReference>
<comment type="function">
    <text>May have a transcription role in testis.</text>
</comment>
<comment type="subcellular location">
    <subcellularLocation>
        <location evidence="1">Nucleus</location>
    </subcellularLocation>
</comment>
<comment type="tissue specificity">
    <text>Specifically expressed in adult testis.</text>
</comment>
<comment type="similarity">
    <text evidence="5">Belongs to the TALE/TGIF homeobox family.</text>
</comment>
<feature type="chain" id="PRO_0000049324" description="Homeobox protein TGIF2LX">
    <location>
        <begin position="1"/>
        <end position="241"/>
    </location>
</feature>
<feature type="DNA-binding region" description="Homeobox; TALE-type" evidence="1">
    <location>
        <begin position="48"/>
        <end position="111"/>
    </location>
</feature>
<feature type="region of interest" description="Disordered" evidence="2">
    <location>
        <begin position="1"/>
        <end position="58"/>
    </location>
</feature>
<feature type="region of interest" description="Disordered" evidence="2">
    <location>
        <begin position="126"/>
        <end position="210"/>
    </location>
</feature>
<feature type="compositionally biased region" description="Polar residues" evidence="2">
    <location>
        <begin position="21"/>
        <end position="39"/>
    </location>
</feature>
<feature type="compositionally biased region" description="Low complexity" evidence="2">
    <location>
        <begin position="195"/>
        <end position="206"/>
    </location>
</feature>
<feature type="sequence variant" id="VAR_017867" description="In dbSNP:rs2290380." evidence="3 4">
    <original>V</original>
    <variation>I</variation>
    <location>
        <position position="197"/>
    </location>
</feature>
<feature type="helix" evidence="6">
    <location>
        <begin position="59"/>
        <end position="71"/>
    </location>
</feature>
<feature type="turn" evidence="6">
    <location>
        <begin position="72"/>
        <end position="75"/>
    </location>
</feature>
<feature type="helix" evidence="6">
    <location>
        <begin position="80"/>
        <end position="90"/>
    </location>
</feature>
<feature type="helix" evidence="6">
    <location>
        <begin position="94"/>
        <end position="107"/>
    </location>
</feature>
<feature type="helix" evidence="6">
    <location>
        <begin position="109"/>
        <end position="112"/>
    </location>
</feature>
<proteinExistence type="evidence at protein level"/>
<reference key="1">
    <citation type="journal article" date="2002" name="Mamm. Genome">
        <title>The human-specific Yp11.2/Xq21.3 homology block encodes a potentially functional testis-specific TGIF-like retroposon.</title>
        <authorList>
            <person name="Blanco-Arias P."/>
            <person name="Sargent C.A."/>
            <person name="Affara N.A."/>
        </authorList>
    </citation>
    <scope>NUCLEOTIDE SEQUENCE [GENOMIC DNA]</scope>
    <source>
        <tissue>Testis</tissue>
    </source>
</reference>
<reference key="2">
    <citation type="journal article" date="2003" name="Nature">
        <title>The male-specific region of the human Y chromosome is a mosaic of discrete sequence classes.</title>
        <authorList>
            <person name="Skaletsky H."/>
            <person name="Kuroda-Kawaguchi T."/>
            <person name="Minx P.J."/>
            <person name="Cordum H.S."/>
            <person name="Hillier L.W."/>
            <person name="Brown L.G."/>
            <person name="Repping S."/>
            <person name="Pyntikova T."/>
            <person name="Ali J."/>
            <person name="Bieri T."/>
            <person name="Chinwalla A."/>
            <person name="Delehaunty A."/>
            <person name="Delehaunty K."/>
            <person name="Du H."/>
            <person name="Fewell G."/>
            <person name="Fulton L."/>
            <person name="Fulton R."/>
            <person name="Graves T.A."/>
            <person name="Hou S.-F."/>
            <person name="Latrielle P."/>
            <person name="Leonard S."/>
            <person name="Mardis E."/>
            <person name="Maupin R."/>
            <person name="McPherson J."/>
            <person name="Miner T."/>
            <person name="Nash W."/>
            <person name="Nguyen C."/>
            <person name="Ozersky P."/>
            <person name="Pepin K."/>
            <person name="Rock S."/>
            <person name="Rohlfing T."/>
            <person name="Scott K."/>
            <person name="Schultz B."/>
            <person name="Strong C."/>
            <person name="Tin-Wollam A."/>
            <person name="Yang S.-P."/>
            <person name="Waterston R.H."/>
            <person name="Wilson R.K."/>
            <person name="Rozen S."/>
            <person name="Page D.C."/>
        </authorList>
    </citation>
    <scope>NUCLEOTIDE SEQUENCE [MRNA]</scope>
    <scope>VARIANT ILE-197</scope>
</reference>
<reference key="3">
    <citation type="journal article" date="2005" name="Nature">
        <title>The DNA sequence of the human X chromosome.</title>
        <authorList>
            <person name="Ross M.T."/>
            <person name="Grafham D.V."/>
            <person name="Coffey A.J."/>
            <person name="Scherer S."/>
            <person name="McLay K."/>
            <person name="Muzny D."/>
            <person name="Platzer M."/>
            <person name="Howell G.R."/>
            <person name="Burrows C."/>
            <person name="Bird C.P."/>
            <person name="Frankish A."/>
            <person name="Lovell F.L."/>
            <person name="Howe K.L."/>
            <person name="Ashurst J.L."/>
            <person name="Fulton R.S."/>
            <person name="Sudbrak R."/>
            <person name="Wen G."/>
            <person name="Jones M.C."/>
            <person name="Hurles M.E."/>
            <person name="Andrews T.D."/>
            <person name="Scott C.E."/>
            <person name="Searle S."/>
            <person name="Ramser J."/>
            <person name="Whittaker A."/>
            <person name="Deadman R."/>
            <person name="Carter N.P."/>
            <person name="Hunt S.E."/>
            <person name="Chen R."/>
            <person name="Cree A."/>
            <person name="Gunaratne P."/>
            <person name="Havlak P."/>
            <person name="Hodgson A."/>
            <person name="Metzker M.L."/>
            <person name="Richards S."/>
            <person name="Scott G."/>
            <person name="Steffen D."/>
            <person name="Sodergren E."/>
            <person name="Wheeler D.A."/>
            <person name="Worley K.C."/>
            <person name="Ainscough R."/>
            <person name="Ambrose K.D."/>
            <person name="Ansari-Lari M.A."/>
            <person name="Aradhya S."/>
            <person name="Ashwell R.I."/>
            <person name="Babbage A.K."/>
            <person name="Bagguley C.L."/>
            <person name="Ballabio A."/>
            <person name="Banerjee R."/>
            <person name="Barker G.E."/>
            <person name="Barlow K.F."/>
            <person name="Barrett I.P."/>
            <person name="Bates K.N."/>
            <person name="Beare D.M."/>
            <person name="Beasley H."/>
            <person name="Beasley O."/>
            <person name="Beck A."/>
            <person name="Bethel G."/>
            <person name="Blechschmidt K."/>
            <person name="Brady N."/>
            <person name="Bray-Allen S."/>
            <person name="Bridgeman A.M."/>
            <person name="Brown A.J."/>
            <person name="Brown M.J."/>
            <person name="Bonnin D."/>
            <person name="Bruford E.A."/>
            <person name="Buhay C."/>
            <person name="Burch P."/>
            <person name="Burford D."/>
            <person name="Burgess J."/>
            <person name="Burrill W."/>
            <person name="Burton J."/>
            <person name="Bye J.M."/>
            <person name="Carder C."/>
            <person name="Carrel L."/>
            <person name="Chako J."/>
            <person name="Chapman J.C."/>
            <person name="Chavez D."/>
            <person name="Chen E."/>
            <person name="Chen G."/>
            <person name="Chen Y."/>
            <person name="Chen Z."/>
            <person name="Chinault C."/>
            <person name="Ciccodicola A."/>
            <person name="Clark S.Y."/>
            <person name="Clarke G."/>
            <person name="Clee C.M."/>
            <person name="Clegg S."/>
            <person name="Clerc-Blankenburg K."/>
            <person name="Clifford K."/>
            <person name="Cobley V."/>
            <person name="Cole C.G."/>
            <person name="Conquer J.S."/>
            <person name="Corby N."/>
            <person name="Connor R.E."/>
            <person name="David R."/>
            <person name="Davies J."/>
            <person name="Davis C."/>
            <person name="Davis J."/>
            <person name="Delgado O."/>
            <person name="Deshazo D."/>
            <person name="Dhami P."/>
            <person name="Ding Y."/>
            <person name="Dinh H."/>
            <person name="Dodsworth S."/>
            <person name="Draper H."/>
            <person name="Dugan-Rocha S."/>
            <person name="Dunham A."/>
            <person name="Dunn M."/>
            <person name="Durbin K.J."/>
            <person name="Dutta I."/>
            <person name="Eades T."/>
            <person name="Ellwood M."/>
            <person name="Emery-Cohen A."/>
            <person name="Errington H."/>
            <person name="Evans K.L."/>
            <person name="Faulkner L."/>
            <person name="Francis F."/>
            <person name="Frankland J."/>
            <person name="Fraser A.E."/>
            <person name="Galgoczy P."/>
            <person name="Gilbert J."/>
            <person name="Gill R."/>
            <person name="Gloeckner G."/>
            <person name="Gregory S.G."/>
            <person name="Gribble S."/>
            <person name="Griffiths C."/>
            <person name="Grocock R."/>
            <person name="Gu Y."/>
            <person name="Gwilliam R."/>
            <person name="Hamilton C."/>
            <person name="Hart E.A."/>
            <person name="Hawes A."/>
            <person name="Heath P.D."/>
            <person name="Heitmann K."/>
            <person name="Hennig S."/>
            <person name="Hernandez J."/>
            <person name="Hinzmann B."/>
            <person name="Ho S."/>
            <person name="Hoffs M."/>
            <person name="Howden P.J."/>
            <person name="Huckle E.J."/>
            <person name="Hume J."/>
            <person name="Hunt P.J."/>
            <person name="Hunt A.R."/>
            <person name="Isherwood J."/>
            <person name="Jacob L."/>
            <person name="Johnson D."/>
            <person name="Jones S."/>
            <person name="de Jong P.J."/>
            <person name="Joseph S.S."/>
            <person name="Keenan S."/>
            <person name="Kelly S."/>
            <person name="Kershaw J.K."/>
            <person name="Khan Z."/>
            <person name="Kioschis P."/>
            <person name="Klages S."/>
            <person name="Knights A.J."/>
            <person name="Kosiura A."/>
            <person name="Kovar-Smith C."/>
            <person name="Laird G.K."/>
            <person name="Langford C."/>
            <person name="Lawlor S."/>
            <person name="Leversha M."/>
            <person name="Lewis L."/>
            <person name="Liu W."/>
            <person name="Lloyd C."/>
            <person name="Lloyd D.M."/>
            <person name="Loulseged H."/>
            <person name="Loveland J.E."/>
            <person name="Lovell J.D."/>
            <person name="Lozado R."/>
            <person name="Lu J."/>
            <person name="Lyne R."/>
            <person name="Ma J."/>
            <person name="Maheshwari M."/>
            <person name="Matthews L.H."/>
            <person name="McDowall J."/>
            <person name="McLaren S."/>
            <person name="McMurray A."/>
            <person name="Meidl P."/>
            <person name="Meitinger T."/>
            <person name="Milne S."/>
            <person name="Miner G."/>
            <person name="Mistry S.L."/>
            <person name="Morgan M."/>
            <person name="Morris S."/>
            <person name="Mueller I."/>
            <person name="Mullikin J.C."/>
            <person name="Nguyen N."/>
            <person name="Nordsiek G."/>
            <person name="Nyakatura G."/>
            <person name="O'dell C.N."/>
            <person name="Okwuonu G."/>
            <person name="Palmer S."/>
            <person name="Pandian R."/>
            <person name="Parker D."/>
            <person name="Parrish J."/>
            <person name="Pasternak S."/>
            <person name="Patel D."/>
            <person name="Pearce A.V."/>
            <person name="Pearson D.M."/>
            <person name="Pelan S.E."/>
            <person name="Perez L."/>
            <person name="Porter K.M."/>
            <person name="Ramsey Y."/>
            <person name="Reichwald K."/>
            <person name="Rhodes S."/>
            <person name="Ridler K.A."/>
            <person name="Schlessinger D."/>
            <person name="Schueler M.G."/>
            <person name="Sehra H.K."/>
            <person name="Shaw-Smith C."/>
            <person name="Shen H."/>
            <person name="Sheridan E.M."/>
            <person name="Shownkeen R."/>
            <person name="Skuce C.D."/>
            <person name="Smith M.L."/>
            <person name="Sotheran E.C."/>
            <person name="Steingruber H.E."/>
            <person name="Steward C.A."/>
            <person name="Storey R."/>
            <person name="Swann R.M."/>
            <person name="Swarbreck D."/>
            <person name="Tabor P.E."/>
            <person name="Taudien S."/>
            <person name="Taylor T."/>
            <person name="Teague B."/>
            <person name="Thomas K."/>
            <person name="Thorpe A."/>
            <person name="Timms K."/>
            <person name="Tracey A."/>
            <person name="Trevanion S."/>
            <person name="Tromans A.C."/>
            <person name="d'Urso M."/>
            <person name="Verduzco D."/>
            <person name="Villasana D."/>
            <person name="Waldron L."/>
            <person name="Wall M."/>
            <person name="Wang Q."/>
            <person name="Warren J."/>
            <person name="Warry G.L."/>
            <person name="Wei X."/>
            <person name="West A."/>
            <person name="Whitehead S.L."/>
            <person name="Whiteley M.N."/>
            <person name="Wilkinson J.E."/>
            <person name="Willey D.L."/>
            <person name="Williams G."/>
            <person name="Williams L."/>
            <person name="Williamson A."/>
            <person name="Williamson H."/>
            <person name="Wilming L."/>
            <person name="Woodmansey R.L."/>
            <person name="Wray P.W."/>
            <person name="Yen J."/>
            <person name="Zhang J."/>
            <person name="Zhou J."/>
            <person name="Zoghbi H."/>
            <person name="Zorilla S."/>
            <person name="Buck D."/>
            <person name="Reinhardt R."/>
            <person name="Poustka A."/>
            <person name="Rosenthal A."/>
            <person name="Lehrach H."/>
            <person name="Meindl A."/>
            <person name="Minx P.J."/>
            <person name="Hillier L.W."/>
            <person name="Willard H.F."/>
            <person name="Wilson R.K."/>
            <person name="Waterston R.H."/>
            <person name="Rice C.M."/>
            <person name="Vaudin M."/>
            <person name="Coulson A."/>
            <person name="Nelson D.L."/>
            <person name="Weinstock G."/>
            <person name="Sulston J.E."/>
            <person name="Durbin R.M."/>
            <person name="Hubbard T."/>
            <person name="Gibbs R.A."/>
            <person name="Beck S."/>
            <person name="Rogers J."/>
            <person name="Bentley D.R."/>
        </authorList>
    </citation>
    <scope>NUCLEOTIDE SEQUENCE [LARGE SCALE GENOMIC DNA]</scope>
</reference>
<reference key="4">
    <citation type="journal article" date="2004" name="Genome Res.">
        <title>The status, quality, and expansion of the NIH full-length cDNA project: the Mammalian Gene Collection (MGC).</title>
        <authorList>
            <consortium name="The MGC Project Team"/>
        </authorList>
    </citation>
    <scope>NUCLEOTIDE SEQUENCE [LARGE SCALE MRNA]</scope>
    <scope>VARIANT ILE-197</scope>
    <source>
        <tissue>Testis</tissue>
    </source>
</reference>
<reference key="5">
    <citation type="submission" date="2006-10" db="PDB data bank">
        <title>The solution structure of the homeobox domain of human homeobox protein TGIF2LX.</title>
        <authorList>
            <consortium name="RIKEN structural genomics initiative (RSGI)"/>
        </authorList>
    </citation>
    <scope>STRUCTURE BY NMR OF 51-120</scope>
</reference>
<evidence type="ECO:0000255" key="1">
    <source>
        <dbReference type="PROSITE-ProRule" id="PRU00108"/>
    </source>
</evidence>
<evidence type="ECO:0000256" key="2">
    <source>
        <dbReference type="SAM" id="MobiDB-lite"/>
    </source>
</evidence>
<evidence type="ECO:0000269" key="3">
    <source>
    </source>
</evidence>
<evidence type="ECO:0000269" key="4">
    <source>
    </source>
</evidence>
<evidence type="ECO:0000305" key="5"/>
<evidence type="ECO:0007829" key="6">
    <source>
        <dbReference type="PDB" id="2DMN"/>
    </source>
</evidence>
<protein>
    <recommendedName>
        <fullName>Homeobox protein TGIF2LX</fullName>
    </recommendedName>
    <alternativeName>
        <fullName>TGF-beta-induced transcription factor 2-like protein</fullName>
    </alternativeName>
    <alternativeName>
        <fullName>TGFB-induced factor 2-like protein, X-linked</fullName>
    </alternativeName>
    <alternativeName>
        <fullName>TGIF-like on the X</fullName>
    </alternativeName>
</protein>
<accession>Q8IUE1</accession>
<accession>Q5JRM9</accession>
<accession>Q8TD48</accession>
<gene>
    <name type="primary">TGIF2LX</name>
    <name type="synonym">TGIFLX</name>
</gene>